<sequence>MTFKTLDDLTDIAGKRVLVRVDLNVPVKDGQVTDTTRIERVAPTIRELSEKGAKVVLLAHFGRPKGEPVADMSLKAIASAVEEILDQRVYFAADCIGDKAANAIAELNDGEVLLLENTRFHKGEEKNDSDFVTALAANGDIYVNDAFSAAHRAHASTEGLAHHLPAYAGRTMQAELEALEKGLGNPKRPVVAIVGGAKVSTKIDLLQNLVKKVDALVIGGGMANTFLAAQGVDVGKSLCEHDLAETAKAILAAASEAGCAIVLPVDGVVAREFKAGADNEVVDIKAIPADAMVLDVGPKSIEAINEWISRAETLVWNGPLGAFEIAPFDRATVAAAKHAAARTRAGSLVSVAGGGDTVAALNHAEVADDFTYVSTAGGAFLEWMEGKPLPGVDVLRQRN</sequence>
<gene>
    <name evidence="1" type="primary">pgk</name>
    <name type="ordered locus">R02765</name>
    <name type="ORF">SMc03981</name>
</gene>
<organism>
    <name type="scientific">Rhizobium meliloti (strain 1021)</name>
    <name type="common">Ensifer meliloti</name>
    <name type="synonym">Sinorhizobium meliloti</name>
    <dbReference type="NCBI Taxonomy" id="266834"/>
    <lineage>
        <taxon>Bacteria</taxon>
        <taxon>Pseudomonadati</taxon>
        <taxon>Pseudomonadota</taxon>
        <taxon>Alphaproteobacteria</taxon>
        <taxon>Hyphomicrobiales</taxon>
        <taxon>Rhizobiaceae</taxon>
        <taxon>Sinorhizobium/Ensifer group</taxon>
        <taxon>Sinorhizobium</taxon>
    </lineage>
</organism>
<accession>Q92M79</accession>
<protein>
    <recommendedName>
        <fullName evidence="1">Phosphoglycerate kinase</fullName>
        <ecNumber evidence="1">2.7.2.3</ecNumber>
    </recommendedName>
</protein>
<feature type="chain" id="PRO_0000145993" description="Phosphoglycerate kinase">
    <location>
        <begin position="1"/>
        <end position="399"/>
    </location>
</feature>
<feature type="binding site" evidence="1">
    <location>
        <begin position="22"/>
        <end position="24"/>
    </location>
    <ligand>
        <name>substrate</name>
    </ligand>
</feature>
<feature type="binding site" evidence="1">
    <location>
        <position position="37"/>
    </location>
    <ligand>
        <name>substrate</name>
    </ligand>
</feature>
<feature type="binding site" evidence="1">
    <location>
        <begin position="60"/>
        <end position="63"/>
    </location>
    <ligand>
        <name>substrate</name>
    </ligand>
</feature>
<feature type="binding site" evidence="1">
    <location>
        <position position="119"/>
    </location>
    <ligand>
        <name>substrate</name>
    </ligand>
</feature>
<feature type="binding site" evidence="1">
    <location>
        <position position="152"/>
    </location>
    <ligand>
        <name>substrate</name>
    </ligand>
</feature>
<feature type="binding site" evidence="1">
    <location>
        <position position="202"/>
    </location>
    <ligand>
        <name>ATP</name>
        <dbReference type="ChEBI" id="CHEBI:30616"/>
    </ligand>
</feature>
<feature type="binding site" evidence="1">
    <location>
        <position position="324"/>
    </location>
    <ligand>
        <name>ATP</name>
        <dbReference type="ChEBI" id="CHEBI:30616"/>
    </ligand>
</feature>
<feature type="binding site" evidence="1">
    <location>
        <begin position="354"/>
        <end position="357"/>
    </location>
    <ligand>
        <name>ATP</name>
        <dbReference type="ChEBI" id="CHEBI:30616"/>
    </ligand>
</feature>
<evidence type="ECO:0000255" key="1">
    <source>
        <dbReference type="HAMAP-Rule" id="MF_00145"/>
    </source>
</evidence>
<comment type="catalytic activity">
    <reaction evidence="1">
        <text>(2R)-3-phosphoglycerate + ATP = (2R)-3-phospho-glyceroyl phosphate + ADP</text>
        <dbReference type="Rhea" id="RHEA:14801"/>
        <dbReference type="ChEBI" id="CHEBI:30616"/>
        <dbReference type="ChEBI" id="CHEBI:57604"/>
        <dbReference type="ChEBI" id="CHEBI:58272"/>
        <dbReference type="ChEBI" id="CHEBI:456216"/>
        <dbReference type="EC" id="2.7.2.3"/>
    </reaction>
</comment>
<comment type="pathway">
    <text evidence="1">Carbohydrate degradation; glycolysis; pyruvate from D-glyceraldehyde 3-phosphate: step 2/5.</text>
</comment>
<comment type="subunit">
    <text evidence="1">Monomer.</text>
</comment>
<comment type="subcellular location">
    <subcellularLocation>
        <location evidence="1">Cytoplasm</location>
    </subcellularLocation>
</comment>
<comment type="similarity">
    <text evidence="1">Belongs to the phosphoglycerate kinase family.</text>
</comment>
<reference key="1">
    <citation type="journal article" date="2001" name="Proc. Natl. Acad. Sci. U.S.A.">
        <title>Analysis of the chromosome sequence of the legume symbiont Sinorhizobium meliloti strain 1021.</title>
        <authorList>
            <person name="Capela D."/>
            <person name="Barloy-Hubler F."/>
            <person name="Gouzy J."/>
            <person name="Bothe G."/>
            <person name="Ampe F."/>
            <person name="Batut J."/>
            <person name="Boistard P."/>
            <person name="Becker A."/>
            <person name="Boutry M."/>
            <person name="Cadieu E."/>
            <person name="Dreano S."/>
            <person name="Gloux S."/>
            <person name="Godrie T."/>
            <person name="Goffeau A."/>
            <person name="Kahn D."/>
            <person name="Kiss E."/>
            <person name="Lelaure V."/>
            <person name="Masuy D."/>
            <person name="Pohl T."/>
            <person name="Portetelle D."/>
            <person name="Puehler A."/>
            <person name="Purnelle B."/>
            <person name="Ramsperger U."/>
            <person name="Renard C."/>
            <person name="Thebault P."/>
            <person name="Vandenbol M."/>
            <person name="Weidner S."/>
            <person name="Galibert F."/>
        </authorList>
    </citation>
    <scope>NUCLEOTIDE SEQUENCE [LARGE SCALE GENOMIC DNA]</scope>
    <source>
        <strain>1021</strain>
    </source>
</reference>
<reference key="2">
    <citation type="journal article" date="2001" name="Science">
        <title>The composite genome of the legume symbiont Sinorhizobium meliloti.</title>
        <authorList>
            <person name="Galibert F."/>
            <person name="Finan T.M."/>
            <person name="Long S.R."/>
            <person name="Puehler A."/>
            <person name="Abola P."/>
            <person name="Ampe F."/>
            <person name="Barloy-Hubler F."/>
            <person name="Barnett M.J."/>
            <person name="Becker A."/>
            <person name="Boistard P."/>
            <person name="Bothe G."/>
            <person name="Boutry M."/>
            <person name="Bowser L."/>
            <person name="Buhrmester J."/>
            <person name="Cadieu E."/>
            <person name="Capela D."/>
            <person name="Chain P."/>
            <person name="Cowie A."/>
            <person name="Davis R.W."/>
            <person name="Dreano S."/>
            <person name="Federspiel N.A."/>
            <person name="Fisher R.F."/>
            <person name="Gloux S."/>
            <person name="Godrie T."/>
            <person name="Goffeau A."/>
            <person name="Golding B."/>
            <person name="Gouzy J."/>
            <person name="Gurjal M."/>
            <person name="Hernandez-Lucas I."/>
            <person name="Hong A."/>
            <person name="Huizar L."/>
            <person name="Hyman R.W."/>
            <person name="Jones T."/>
            <person name="Kahn D."/>
            <person name="Kahn M.L."/>
            <person name="Kalman S."/>
            <person name="Keating D.H."/>
            <person name="Kiss E."/>
            <person name="Komp C."/>
            <person name="Lelaure V."/>
            <person name="Masuy D."/>
            <person name="Palm C."/>
            <person name="Peck M.C."/>
            <person name="Pohl T.M."/>
            <person name="Portetelle D."/>
            <person name="Purnelle B."/>
            <person name="Ramsperger U."/>
            <person name="Surzycki R."/>
            <person name="Thebault P."/>
            <person name="Vandenbol M."/>
            <person name="Vorhoelter F.J."/>
            <person name="Weidner S."/>
            <person name="Wells D.H."/>
            <person name="Wong K."/>
            <person name="Yeh K.-C."/>
            <person name="Batut J."/>
        </authorList>
    </citation>
    <scope>NUCLEOTIDE SEQUENCE [LARGE SCALE GENOMIC DNA]</scope>
    <source>
        <strain>1021</strain>
    </source>
</reference>
<name>PGK_RHIME</name>
<keyword id="KW-0067">ATP-binding</keyword>
<keyword id="KW-0963">Cytoplasm</keyword>
<keyword id="KW-0324">Glycolysis</keyword>
<keyword id="KW-0418">Kinase</keyword>
<keyword id="KW-0547">Nucleotide-binding</keyword>
<keyword id="KW-1185">Reference proteome</keyword>
<keyword id="KW-0808">Transferase</keyword>
<dbReference type="EC" id="2.7.2.3" evidence="1"/>
<dbReference type="EMBL" id="AL591688">
    <property type="protein sequence ID" value="CAC47344.1"/>
    <property type="molecule type" value="Genomic_DNA"/>
</dbReference>
<dbReference type="RefSeq" id="NP_386871.1">
    <property type="nucleotide sequence ID" value="NC_003047.1"/>
</dbReference>
<dbReference type="RefSeq" id="WP_010970179.1">
    <property type="nucleotide sequence ID" value="NC_003047.1"/>
</dbReference>
<dbReference type="SMR" id="Q92M79"/>
<dbReference type="EnsemblBacteria" id="CAC47344">
    <property type="protein sequence ID" value="CAC47344"/>
    <property type="gene ID" value="SMc03981"/>
</dbReference>
<dbReference type="KEGG" id="sme:SMc03981"/>
<dbReference type="PATRIC" id="fig|266834.11.peg.4275"/>
<dbReference type="eggNOG" id="COG0126">
    <property type="taxonomic scope" value="Bacteria"/>
</dbReference>
<dbReference type="HOGENOM" id="CLU_025427_0_2_5"/>
<dbReference type="OrthoDB" id="9808460at2"/>
<dbReference type="UniPathway" id="UPA00109">
    <property type="reaction ID" value="UER00185"/>
</dbReference>
<dbReference type="Proteomes" id="UP000001976">
    <property type="component" value="Chromosome"/>
</dbReference>
<dbReference type="GO" id="GO:0005829">
    <property type="term" value="C:cytosol"/>
    <property type="evidence" value="ECO:0007669"/>
    <property type="project" value="TreeGrafter"/>
</dbReference>
<dbReference type="GO" id="GO:0043531">
    <property type="term" value="F:ADP binding"/>
    <property type="evidence" value="ECO:0007669"/>
    <property type="project" value="TreeGrafter"/>
</dbReference>
<dbReference type="GO" id="GO:0005524">
    <property type="term" value="F:ATP binding"/>
    <property type="evidence" value="ECO:0007669"/>
    <property type="project" value="UniProtKB-KW"/>
</dbReference>
<dbReference type="GO" id="GO:0004618">
    <property type="term" value="F:phosphoglycerate kinase activity"/>
    <property type="evidence" value="ECO:0007669"/>
    <property type="project" value="UniProtKB-UniRule"/>
</dbReference>
<dbReference type="GO" id="GO:0006094">
    <property type="term" value="P:gluconeogenesis"/>
    <property type="evidence" value="ECO:0007669"/>
    <property type="project" value="TreeGrafter"/>
</dbReference>
<dbReference type="GO" id="GO:0006096">
    <property type="term" value="P:glycolytic process"/>
    <property type="evidence" value="ECO:0007669"/>
    <property type="project" value="UniProtKB-UniRule"/>
</dbReference>
<dbReference type="FunFam" id="3.40.50.1260:FF:000006">
    <property type="entry name" value="Phosphoglycerate kinase"/>
    <property type="match status" value="1"/>
</dbReference>
<dbReference type="FunFam" id="3.40.50.1260:FF:000031">
    <property type="entry name" value="Phosphoglycerate kinase 1"/>
    <property type="match status" value="1"/>
</dbReference>
<dbReference type="Gene3D" id="3.40.50.1260">
    <property type="entry name" value="Phosphoglycerate kinase, N-terminal domain"/>
    <property type="match status" value="2"/>
</dbReference>
<dbReference type="HAMAP" id="MF_00145">
    <property type="entry name" value="Phosphoglyc_kinase"/>
    <property type="match status" value="1"/>
</dbReference>
<dbReference type="InterPro" id="IPR001576">
    <property type="entry name" value="Phosphoglycerate_kinase"/>
</dbReference>
<dbReference type="InterPro" id="IPR015911">
    <property type="entry name" value="Phosphoglycerate_kinase_CS"/>
</dbReference>
<dbReference type="InterPro" id="IPR015824">
    <property type="entry name" value="Phosphoglycerate_kinase_N"/>
</dbReference>
<dbReference type="InterPro" id="IPR036043">
    <property type="entry name" value="Phosphoglycerate_kinase_sf"/>
</dbReference>
<dbReference type="PANTHER" id="PTHR11406">
    <property type="entry name" value="PHOSPHOGLYCERATE KINASE"/>
    <property type="match status" value="1"/>
</dbReference>
<dbReference type="PANTHER" id="PTHR11406:SF23">
    <property type="entry name" value="PHOSPHOGLYCERATE KINASE 1, CHLOROPLASTIC-RELATED"/>
    <property type="match status" value="1"/>
</dbReference>
<dbReference type="Pfam" id="PF00162">
    <property type="entry name" value="PGK"/>
    <property type="match status" value="1"/>
</dbReference>
<dbReference type="PIRSF" id="PIRSF000724">
    <property type="entry name" value="Pgk"/>
    <property type="match status" value="1"/>
</dbReference>
<dbReference type="PRINTS" id="PR00477">
    <property type="entry name" value="PHGLYCKINASE"/>
</dbReference>
<dbReference type="SUPFAM" id="SSF53748">
    <property type="entry name" value="Phosphoglycerate kinase"/>
    <property type="match status" value="1"/>
</dbReference>
<dbReference type="PROSITE" id="PS00111">
    <property type="entry name" value="PGLYCERATE_KINASE"/>
    <property type="match status" value="1"/>
</dbReference>
<proteinExistence type="inferred from homology"/>